<proteinExistence type="inferred from homology"/>
<gene>
    <name evidence="1" type="primary">rplA</name>
    <name evidence="1" type="synonym">rpl1</name>
    <name type="ordered locus">UU540</name>
</gene>
<dbReference type="EMBL" id="AF222894">
    <property type="protein sequence ID" value="AAF30953.1"/>
    <property type="molecule type" value="Genomic_DNA"/>
</dbReference>
<dbReference type="RefSeq" id="WP_006688527.1">
    <property type="nucleotide sequence ID" value="NC_002162.1"/>
</dbReference>
<dbReference type="SMR" id="Q9PPV0"/>
<dbReference type="STRING" id="273119.UU540"/>
<dbReference type="EnsemblBacteria" id="AAF30953">
    <property type="protein sequence ID" value="AAF30953"/>
    <property type="gene ID" value="UU540"/>
</dbReference>
<dbReference type="GeneID" id="29672436"/>
<dbReference type="KEGG" id="uur:UU540"/>
<dbReference type="eggNOG" id="COG0081">
    <property type="taxonomic scope" value="Bacteria"/>
</dbReference>
<dbReference type="HOGENOM" id="CLU_062853_0_0_14"/>
<dbReference type="OrthoDB" id="9803740at2"/>
<dbReference type="Proteomes" id="UP000000423">
    <property type="component" value="Chromosome"/>
</dbReference>
<dbReference type="GO" id="GO:0015934">
    <property type="term" value="C:large ribosomal subunit"/>
    <property type="evidence" value="ECO:0007669"/>
    <property type="project" value="InterPro"/>
</dbReference>
<dbReference type="GO" id="GO:0019843">
    <property type="term" value="F:rRNA binding"/>
    <property type="evidence" value="ECO:0007669"/>
    <property type="project" value="UniProtKB-UniRule"/>
</dbReference>
<dbReference type="GO" id="GO:0003735">
    <property type="term" value="F:structural constituent of ribosome"/>
    <property type="evidence" value="ECO:0007669"/>
    <property type="project" value="InterPro"/>
</dbReference>
<dbReference type="GO" id="GO:0000049">
    <property type="term" value="F:tRNA binding"/>
    <property type="evidence" value="ECO:0007669"/>
    <property type="project" value="UniProtKB-KW"/>
</dbReference>
<dbReference type="GO" id="GO:0006417">
    <property type="term" value="P:regulation of translation"/>
    <property type="evidence" value="ECO:0007669"/>
    <property type="project" value="UniProtKB-KW"/>
</dbReference>
<dbReference type="GO" id="GO:0006412">
    <property type="term" value="P:translation"/>
    <property type="evidence" value="ECO:0007669"/>
    <property type="project" value="UniProtKB-UniRule"/>
</dbReference>
<dbReference type="CDD" id="cd00403">
    <property type="entry name" value="Ribosomal_L1"/>
    <property type="match status" value="1"/>
</dbReference>
<dbReference type="FunFam" id="3.40.50.790:FF:000001">
    <property type="entry name" value="50S ribosomal protein L1"/>
    <property type="match status" value="1"/>
</dbReference>
<dbReference type="Gene3D" id="3.30.190.20">
    <property type="match status" value="1"/>
</dbReference>
<dbReference type="Gene3D" id="3.40.50.790">
    <property type="match status" value="1"/>
</dbReference>
<dbReference type="HAMAP" id="MF_01318_B">
    <property type="entry name" value="Ribosomal_uL1_B"/>
    <property type="match status" value="1"/>
</dbReference>
<dbReference type="InterPro" id="IPR005878">
    <property type="entry name" value="Ribosom_uL1_bac-type"/>
</dbReference>
<dbReference type="InterPro" id="IPR002143">
    <property type="entry name" value="Ribosomal_uL1"/>
</dbReference>
<dbReference type="InterPro" id="IPR023674">
    <property type="entry name" value="Ribosomal_uL1-like"/>
</dbReference>
<dbReference type="InterPro" id="IPR028364">
    <property type="entry name" value="Ribosomal_uL1/biogenesis"/>
</dbReference>
<dbReference type="InterPro" id="IPR016095">
    <property type="entry name" value="Ribosomal_uL1_3-a/b-sand"/>
</dbReference>
<dbReference type="InterPro" id="IPR023673">
    <property type="entry name" value="Ribosomal_uL1_CS"/>
</dbReference>
<dbReference type="NCBIfam" id="TIGR01169">
    <property type="entry name" value="rplA_bact"/>
    <property type="match status" value="1"/>
</dbReference>
<dbReference type="PANTHER" id="PTHR36427">
    <property type="entry name" value="54S RIBOSOMAL PROTEIN L1, MITOCHONDRIAL"/>
    <property type="match status" value="1"/>
</dbReference>
<dbReference type="PANTHER" id="PTHR36427:SF3">
    <property type="entry name" value="LARGE RIBOSOMAL SUBUNIT PROTEIN UL1M"/>
    <property type="match status" value="1"/>
</dbReference>
<dbReference type="Pfam" id="PF00687">
    <property type="entry name" value="Ribosomal_L1"/>
    <property type="match status" value="1"/>
</dbReference>
<dbReference type="PIRSF" id="PIRSF002155">
    <property type="entry name" value="Ribosomal_L1"/>
    <property type="match status" value="1"/>
</dbReference>
<dbReference type="SUPFAM" id="SSF56808">
    <property type="entry name" value="Ribosomal protein L1"/>
    <property type="match status" value="1"/>
</dbReference>
<dbReference type="PROSITE" id="PS01199">
    <property type="entry name" value="RIBOSOMAL_L1"/>
    <property type="match status" value="1"/>
</dbReference>
<protein>
    <recommendedName>
        <fullName evidence="1">Large ribosomal subunit protein uL1</fullName>
    </recommendedName>
    <alternativeName>
        <fullName evidence="2">50S ribosomal protein L1</fullName>
    </alternativeName>
</protein>
<evidence type="ECO:0000255" key="1">
    <source>
        <dbReference type="HAMAP-Rule" id="MF_01318"/>
    </source>
</evidence>
<evidence type="ECO:0000305" key="2"/>
<organism>
    <name type="scientific">Ureaplasma parvum serovar 3 (strain ATCC 700970)</name>
    <dbReference type="NCBI Taxonomy" id="273119"/>
    <lineage>
        <taxon>Bacteria</taxon>
        <taxon>Bacillati</taxon>
        <taxon>Mycoplasmatota</taxon>
        <taxon>Mycoplasmoidales</taxon>
        <taxon>Mycoplasmoidaceae</taxon>
        <taxon>Ureaplasma</taxon>
    </lineage>
</organism>
<keyword id="KW-1185">Reference proteome</keyword>
<keyword id="KW-0678">Repressor</keyword>
<keyword id="KW-0687">Ribonucleoprotein</keyword>
<keyword id="KW-0689">Ribosomal protein</keyword>
<keyword id="KW-0694">RNA-binding</keyword>
<keyword id="KW-0699">rRNA-binding</keyword>
<keyword id="KW-0810">Translation regulation</keyword>
<keyword id="KW-0820">tRNA-binding</keyword>
<reference key="1">
    <citation type="journal article" date="2000" name="Nature">
        <title>The complete sequence of the mucosal pathogen Ureaplasma urealyticum.</title>
        <authorList>
            <person name="Glass J.I."/>
            <person name="Lefkowitz E.J."/>
            <person name="Glass J.S."/>
            <person name="Heiner C.R."/>
            <person name="Chen E.Y."/>
            <person name="Cassell G.H."/>
        </authorList>
    </citation>
    <scope>NUCLEOTIDE SEQUENCE [LARGE SCALE GENOMIC DNA]</scope>
    <source>
        <strain>ATCC 700970</strain>
    </source>
</reference>
<comment type="function">
    <text evidence="1">Binds directly to 23S rRNA. The L1 stalk is quite mobile in the ribosome, and is involved in E site tRNA release.</text>
</comment>
<comment type="function">
    <text evidence="1">Protein L1 is also a translational repressor protein, it controls the translation of the L11 operon by binding to its mRNA.</text>
</comment>
<comment type="subunit">
    <text evidence="1">Part of the 50S ribosomal subunit.</text>
</comment>
<comment type="similarity">
    <text evidence="1">Belongs to the universal ribosomal protein uL1 family.</text>
</comment>
<sequence length="229" mass="25167">MAKISKKLFAAYEGIDKQKAYPLFDAIKLAQEKSITKFDGSINIAIKLNLDTTKVEQQLRGSISLPNGNGKNVRVLVLSEDITKEEAASVGADYFGGADYIQNIEKMLNQIDVIITNQKMMPLLAKLGKVLGPRGLMPNPKIGTVTNDVLKAVEEFKRGRIEYRTDTYGNIHMSIGRVSFETTKIEENANALLNLIKSKKPATVKGQYIQNIAVSPTMGPGIKVVINNN</sequence>
<accession>Q9PPV0</accession>
<name>RL1_UREPA</name>
<feature type="chain" id="PRO_0000125771" description="Large ribosomal subunit protein uL1">
    <location>
        <begin position="1"/>
        <end position="229"/>
    </location>
</feature>